<evidence type="ECO:0000255" key="1">
    <source>
        <dbReference type="PIRSR" id="PIRSR000331-2"/>
    </source>
</evidence>
<evidence type="ECO:0000269" key="2">
    <source>
    </source>
</evidence>
<evidence type="ECO:0000269" key="3">
    <source>
    </source>
</evidence>
<evidence type="ECO:0000303" key="4">
    <source>
    </source>
</evidence>
<evidence type="ECO:0000303" key="5">
    <source>
    </source>
</evidence>
<evidence type="ECO:0000305" key="6"/>
<evidence type="ECO:0000305" key="7">
    <source>
    </source>
</evidence>
<evidence type="ECO:0000305" key="8">
    <source>
    </source>
</evidence>
<evidence type="ECO:0000312" key="9">
    <source>
        <dbReference type="EMBL" id="AAG07478.1"/>
    </source>
</evidence>
<keyword id="KW-0058">Aromatic hydrocarbons catabolism</keyword>
<keyword id="KW-0274">FAD</keyword>
<keyword id="KW-0285">Flavoprotein</keyword>
<keyword id="KW-0503">Monooxygenase</keyword>
<keyword id="KW-0560">Oxidoreductase</keyword>
<keyword id="KW-1185">Reference proteome</keyword>
<accession>Q9HWT7</accession>
<name>HPAB_PSEAE</name>
<dbReference type="EC" id="1.14.14.9" evidence="2 3"/>
<dbReference type="EMBL" id="AE004091">
    <property type="protein sequence ID" value="AAG07478.1"/>
    <property type="molecule type" value="Genomic_DNA"/>
</dbReference>
<dbReference type="PIR" id="H83134">
    <property type="entry name" value="H83134"/>
</dbReference>
<dbReference type="RefSeq" id="NP_252780.1">
    <property type="nucleotide sequence ID" value="NC_002516.2"/>
</dbReference>
<dbReference type="RefSeq" id="WP_003104533.1">
    <property type="nucleotide sequence ID" value="NZ_QZGE01000013.1"/>
</dbReference>
<dbReference type="SMR" id="Q9HWT7"/>
<dbReference type="STRING" id="208964.PA4091"/>
<dbReference type="PaxDb" id="208964-PA4091"/>
<dbReference type="GeneID" id="878727"/>
<dbReference type="KEGG" id="pae:PA4091"/>
<dbReference type="PATRIC" id="fig|208964.12.peg.4284"/>
<dbReference type="PseudoCAP" id="PA4091"/>
<dbReference type="HOGENOM" id="CLU_023920_2_1_6"/>
<dbReference type="InParanoid" id="Q9HWT7"/>
<dbReference type="OrthoDB" id="7233724at2"/>
<dbReference type="PhylomeDB" id="Q9HWT7"/>
<dbReference type="BioCyc" id="PAER208964:G1FZ6-4163-MONOMER"/>
<dbReference type="BRENDA" id="1.14.14.9">
    <property type="organism ID" value="5087"/>
</dbReference>
<dbReference type="UniPathway" id="UPA00208">
    <property type="reaction ID" value="UER00416"/>
</dbReference>
<dbReference type="Proteomes" id="UP000002438">
    <property type="component" value="Chromosome"/>
</dbReference>
<dbReference type="GO" id="GO:0052881">
    <property type="term" value="F:4-hydroxyphenylacetate 3-monooxygenase activity"/>
    <property type="evidence" value="ECO:0000314"/>
    <property type="project" value="UniProtKB"/>
</dbReference>
<dbReference type="GO" id="GO:0050660">
    <property type="term" value="F:flavin adenine dinucleotide binding"/>
    <property type="evidence" value="ECO:0000314"/>
    <property type="project" value="UniProtKB"/>
</dbReference>
<dbReference type="GO" id="GO:0016627">
    <property type="term" value="F:oxidoreductase activity, acting on the CH-CH group of donors"/>
    <property type="evidence" value="ECO:0007669"/>
    <property type="project" value="InterPro"/>
</dbReference>
<dbReference type="GO" id="GO:0042803">
    <property type="term" value="F:protein homodimerization activity"/>
    <property type="evidence" value="ECO:0000314"/>
    <property type="project" value="UniProtKB"/>
</dbReference>
<dbReference type="GO" id="GO:0010124">
    <property type="term" value="P:phenylacetate catabolic process"/>
    <property type="evidence" value="ECO:0007669"/>
    <property type="project" value="InterPro"/>
</dbReference>
<dbReference type="FunFam" id="1.10.3140.10:FF:000001">
    <property type="entry name" value="4-hydroxyphenylacetate 3-monooxygenase oxygenase component"/>
    <property type="match status" value="1"/>
</dbReference>
<dbReference type="FunFam" id="1.20.140.10:FF:000044">
    <property type="entry name" value="4-hydroxyphenylacetate 3-monooxygenase oxygenase component"/>
    <property type="match status" value="1"/>
</dbReference>
<dbReference type="FunFam" id="2.40.110.10:FF:000026">
    <property type="entry name" value="4-hydroxyphenylacetate 3-monooxygenase oxygenase component"/>
    <property type="match status" value="1"/>
</dbReference>
<dbReference type="Gene3D" id="1.10.3140.10">
    <property type="entry name" value="4-hydroxybutyryl-coa dehydratase, domain 1"/>
    <property type="match status" value="1"/>
</dbReference>
<dbReference type="Gene3D" id="2.40.110.10">
    <property type="entry name" value="Butyryl-CoA Dehydrogenase, subunit A, domain 2"/>
    <property type="match status" value="1"/>
</dbReference>
<dbReference type="Gene3D" id="1.20.140.10">
    <property type="entry name" value="Butyryl-CoA Dehydrogenase, subunit A, domain 3"/>
    <property type="match status" value="1"/>
</dbReference>
<dbReference type="InterPro" id="IPR046373">
    <property type="entry name" value="Acyl-CoA_Oxase/DH_mid-dom_sf"/>
</dbReference>
<dbReference type="InterPro" id="IPR036250">
    <property type="entry name" value="AcylCo_DH-like_C"/>
</dbReference>
<dbReference type="InterPro" id="IPR009100">
    <property type="entry name" value="AcylCoA_DH/oxidase_NM_dom_sf"/>
</dbReference>
<dbReference type="InterPro" id="IPR024677">
    <property type="entry name" value="HpaB/PvcC"/>
</dbReference>
<dbReference type="InterPro" id="IPR004925">
    <property type="entry name" value="HpaB/PvcC/4-BUDH"/>
</dbReference>
<dbReference type="InterPro" id="IPR024719">
    <property type="entry name" value="HpaB/PvcC/4-BUDH_C"/>
</dbReference>
<dbReference type="InterPro" id="IPR024674">
    <property type="entry name" value="HpaB/PvcC/4-BUDH_N"/>
</dbReference>
<dbReference type="InterPro" id="IPR012688">
    <property type="entry name" value="HpaB_gammaproteobact"/>
</dbReference>
<dbReference type="NCBIfam" id="TIGR02310">
    <property type="entry name" value="HpaB-2"/>
    <property type="match status" value="1"/>
</dbReference>
<dbReference type="PANTHER" id="PTHR36117">
    <property type="entry name" value="4-HYDROXYPHENYLACETATE 3-MONOOXYGENASE-RELATED"/>
    <property type="match status" value="1"/>
</dbReference>
<dbReference type="PANTHER" id="PTHR36117:SF3">
    <property type="entry name" value="4-HYDROXYPHENYLACETATE 3-MONOOXYGENASE-RELATED"/>
    <property type="match status" value="1"/>
</dbReference>
<dbReference type="Pfam" id="PF03241">
    <property type="entry name" value="HpaB"/>
    <property type="match status" value="1"/>
</dbReference>
<dbReference type="Pfam" id="PF11794">
    <property type="entry name" value="HpaB_N"/>
    <property type="match status" value="1"/>
</dbReference>
<dbReference type="PIRSF" id="PIRSF500125">
    <property type="entry name" value="4_HPA_large"/>
    <property type="match status" value="1"/>
</dbReference>
<dbReference type="PIRSF" id="PIRSF000331">
    <property type="entry name" value="HpaA_HpaB"/>
    <property type="match status" value="1"/>
</dbReference>
<dbReference type="SUPFAM" id="SSF47203">
    <property type="entry name" value="Acyl-CoA dehydrogenase C-terminal domain-like"/>
    <property type="match status" value="1"/>
</dbReference>
<dbReference type="SUPFAM" id="SSF56645">
    <property type="entry name" value="Acyl-CoA dehydrogenase NM domain-like"/>
    <property type="match status" value="1"/>
</dbReference>
<reference key="1">
    <citation type="journal article" date="2000" name="Nature">
        <title>Complete genome sequence of Pseudomonas aeruginosa PAO1, an opportunistic pathogen.</title>
        <authorList>
            <person name="Stover C.K."/>
            <person name="Pham X.-Q.T."/>
            <person name="Erwin A.L."/>
            <person name="Mizoguchi S.D."/>
            <person name="Warrener P."/>
            <person name="Hickey M.J."/>
            <person name="Brinkman F.S.L."/>
            <person name="Hufnagle W.O."/>
            <person name="Kowalik D.J."/>
            <person name="Lagrou M."/>
            <person name="Garber R.L."/>
            <person name="Goltry L."/>
            <person name="Tolentino E."/>
            <person name="Westbrock-Wadman S."/>
            <person name="Yuan Y."/>
            <person name="Brody L.L."/>
            <person name="Coulter S.N."/>
            <person name="Folger K.R."/>
            <person name="Kas A."/>
            <person name="Larbig K."/>
            <person name="Lim R.M."/>
            <person name="Smith K.A."/>
            <person name="Spencer D.H."/>
            <person name="Wong G.K.-S."/>
            <person name="Wu Z."/>
            <person name="Paulsen I.T."/>
            <person name="Reizer J."/>
            <person name="Saier M.H. Jr."/>
            <person name="Hancock R.E.W."/>
            <person name="Lory S."/>
            <person name="Olson M.V."/>
        </authorList>
    </citation>
    <scope>NUCLEOTIDE SEQUENCE [LARGE SCALE GENOMIC DNA]</scope>
    <source>
        <strain>ATCC 15692 / DSM 22644 / CIP 104116 / JCM 14847 / LMG 12228 / 1C / PRS 101 / PAO1</strain>
    </source>
</reference>
<reference key="2">
    <citation type="journal article" date="2010" name="Biochemistry">
        <title>Studies on the mechanism of p-hydroxyphenylacetate 3-hydroxylase from Pseudomonas aeruginosa: a system composed of a small flavin reductase and a large flavin-dependent oxygenase.</title>
        <authorList>
            <person name="Chakraborty S."/>
            <person name="Ortiz-Maldonado M."/>
            <person name="Entsch B."/>
            <person name="Ballou D.P."/>
        </authorList>
    </citation>
    <scope>FUNCTION</scope>
    <scope>CATALYTIC ACTIVITY</scope>
    <scope>SUBUNIT</scope>
    <scope>REACTION MECHANISM</scope>
</reference>
<reference key="3">
    <citation type="journal article" date="2014" name="Appl. Microbiol. Biotechnol.">
        <title>Catalytic activity of the two-component flavin-dependent monooxygenase from Pseudomonas aeruginosa toward cinnamic acid derivatives.</title>
        <authorList>
            <person name="Furuya T."/>
            <person name="Kino K."/>
        </authorList>
    </citation>
    <scope>FUNCTION</scope>
    <scope>CATALYTIC ACTIVITY</scope>
    <scope>SUBSTRATE SPECIFICITY</scope>
    <scope>SUBUNIT</scope>
    <scope>BIOTECHNOLOGY</scope>
    <source>
        <strain>ATCC 15692 / DSM 22644 / CIP 104116 / JCM 14847 / LMG 12228 / 1C / PRS 101 / PAO1</strain>
    </source>
</reference>
<feature type="chain" id="PRO_0000437538" description="4-hydroxyphenylacetate 3-monooxygenase oxygenase component">
    <location>
        <begin position="1"/>
        <end position="520"/>
    </location>
</feature>
<feature type="binding site" evidence="1">
    <location>
        <begin position="155"/>
        <end position="157"/>
    </location>
    <ligand>
        <name>FAD</name>
        <dbReference type="ChEBI" id="CHEBI:57692"/>
    </ligand>
</feature>
<feature type="binding site" evidence="1">
    <location>
        <position position="196"/>
    </location>
    <ligand>
        <name>FAD</name>
        <dbReference type="ChEBI" id="CHEBI:57692"/>
    </ligand>
</feature>
<gene>
    <name evidence="5" type="primary">hpaB</name>
    <name evidence="4 9" type="synonym">hpaA</name>
    <name evidence="9" type="ordered locus">PA4091</name>
</gene>
<proteinExistence type="evidence at protein level"/>
<protein>
    <recommendedName>
        <fullName evidence="7">4-hydroxyphenylacetate 3-monooxygenase oxygenase component</fullName>
        <shortName evidence="7">HPA 3-monooxygenase oxygenase component</shortName>
        <ecNumber evidence="2 3">1.14.14.9</ecNumber>
    </recommendedName>
    <alternativeName>
        <fullName evidence="7">p-hydroxyphenylacetate 3-hydroxylase large component</fullName>
        <shortName evidence="7">HPAH large component</shortName>
    </alternativeName>
</protein>
<comment type="function">
    <text evidence="2 3">Oxygenase component of the 4-hydroxyphenylacetate (HPA) 3-hydroxylase. Catalyzes the hydroxylation of 4-hydroxyphenylacetate to form 3,4-dihydroxyphenylacetate, using FADH(-) provided by the reductase component HpaC to activate oxygen. To a lesser extent, can also use reduced FMN (PubMed:20000468). In vitro, has hydroxylation activity toward tyrosol and various cinnamic acid derivatives, catalyzing the hydroxylation of p-coumaric acid, caffeic acid, ferulic acid, and coniferaldehyde (PubMed:23666444).</text>
</comment>
<comment type="catalytic activity">
    <reaction evidence="2 3">
        <text>4-hydroxyphenylacetate + FADH2 + O2 = 3,4-dihydroxyphenylacetate + FAD + H2O + H(+)</text>
        <dbReference type="Rhea" id="RHEA:30595"/>
        <dbReference type="ChEBI" id="CHEBI:15377"/>
        <dbReference type="ChEBI" id="CHEBI:15378"/>
        <dbReference type="ChEBI" id="CHEBI:15379"/>
        <dbReference type="ChEBI" id="CHEBI:17612"/>
        <dbReference type="ChEBI" id="CHEBI:48999"/>
        <dbReference type="ChEBI" id="CHEBI:57692"/>
        <dbReference type="ChEBI" id="CHEBI:58307"/>
        <dbReference type="EC" id="1.14.14.9"/>
    </reaction>
</comment>
<comment type="pathway">
    <text evidence="6">Aromatic compound metabolism; 4-hydroxyphenylacetate degradation; pyruvate and succinate semialdehyde from 4-hydroxyphenylacetate: step 1/7.</text>
</comment>
<comment type="subunit">
    <text evidence="2 8">Homodimer. HPA 3-hydroxylase consists of a reductase component HpaC and an oxygenase component HpaB. Some form of interactions between the reductase and the oxygenase facilitate the transfer of FADH(-) to the oxygenase in P.aeruginosa, although interactions are not required in other species.</text>
</comment>
<comment type="biotechnology">
    <text evidence="3">HpaBC can provide a biocatalytic synthetic approach to the production of hydroxycinnamic acids that is an alternative to, or complementary to, conventional methods such as chemical synthesis and extraction from plant sources.</text>
</comment>
<comment type="similarity">
    <text evidence="6">Belongs to the FADH(2)-utilizing monooxygenase family.</text>
</comment>
<organism>
    <name type="scientific">Pseudomonas aeruginosa (strain ATCC 15692 / DSM 22644 / CIP 104116 / JCM 14847 / LMG 12228 / 1C / PRS 101 / PAO1)</name>
    <dbReference type="NCBI Taxonomy" id="208964"/>
    <lineage>
        <taxon>Bacteria</taxon>
        <taxon>Pseudomonadati</taxon>
        <taxon>Pseudomonadota</taxon>
        <taxon>Gammaproteobacteria</taxon>
        <taxon>Pseudomonadales</taxon>
        <taxon>Pseudomonadaceae</taxon>
        <taxon>Pseudomonas</taxon>
    </lineage>
</organism>
<sequence>MKPEDFRASATRPFTGEEYLASLRDDREIYIYGDRVKDVTSHPAFRNAAASMARLYDALHDPQSKEKLCWETDTGNGGYTHKFFRYARSADELRQQRDAIAEWSRLTYGWMGRTPDYKAAFGSALGANPGFYGRFEDNAKTWYKRIQEACLYLNHAIVNPPIDRDKPVDQVKDVFISVDEEVDGGIVVSGAKVVATNSALTHYNFVGQGSAQLLGDNTDFALMFIAPMNTPGMKLICRPSYELVAGIAGSPFDYPLSSRFDENDAILVMDKVFIPWENVLIYRDFERCKQWFPQGGFGRLFPMQGCTRLAVKLDFITGALYKALQCTGSLEFRGVQAQVGEVVAWRNLFWSLTDAMYGNASEWHGGAFLPSAEALQAYRVLAPQAYPEIKKTIEQVVASGLIYLPSGVRDLHNPQLDKYLSTYCRGSGGMGHRERIKILKLLWDAIGSEFGGRHELYEINYAGSQDEIRMQALRQAIGSGAMKGMLGMVEQCMGDYDENGWTVPHLHNPDDINVLDRIRQ</sequence>